<organism>
    <name type="scientific">Mycobacterium tuberculosis (strain ATCC 25177 / H37Ra)</name>
    <dbReference type="NCBI Taxonomy" id="419947"/>
    <lineage>
        <taxon>Bacteria</taxon>
        <taxon>Bacillati</taxon>
        <taxon>Actinomycetota</taxon>
        <taxon>Actinomycetes</taxon>
        <taxon>Mycobacteriales</taxon>
        <taxon>Mycobacteriaceae</taxon>
        <taxon>Mycobacterium</taxon>
        <taxon>Mycobacterium tuberculosis complex</taxon>
    </lineage>
</organism>
<keyword id="KW-0066">ATP synthesis</keyword>
<keyword id="KW-0067">ATP-binding</keyword>
<keyword id="KW-1003">Cell membrane</keyword>
<keyword id="KW-0139">CF(1)</keyword>
<keyword id="KW-0375">Hydrogen ion transport</keyword>
<keyword id="KW-0406">Ion transport</keyword>
<keyword id="KW-0472">Membrane</keyword>
<keyword id="KW-0547">Nucleotide-binding</keyword>
<keyword id="KW-1185">Reference proteome</keyword>
<keyword id="KW-1278">Translocase</keyword>
<keyword id="KW-0813">Transport</keyword>
<sequence>MAELTIPADDIQSAIEEYVSSFTADTSREEVGTVVDAGDGIAHVEGLPSVMTQELLEFPGGILGVALNLDEHSVGAVILGDFENIEEGQQVKRTGEVLSVPVGDGFLGRVVNPLGQPIDGRGDVDSDTRRALELQAPSVVHRQGVKEPLQTGIKAIDAMTPIGRGQRQLIIGDRKTGKTAVCVDTILNQRQNWESGDPKKQVRCVYVAIGQKGTTIAAVRRTLEEGGAMDYTTIVAAAASESAGFKWLAPYTGSAIAQHWMYEGKHVLIIFDDLTKQAEAYRAISLLLRRPPGREAYPGDVFYLHSRLLERCAKLSDDLGGGSLTGLPIIETKANDISAYIPTNVISITDGQCFLETDLFNQGVRPAINVGVSVSRVGGAAQIKAMKEVAGSLRLDLSQYRELEAFAAFASDLDAASKAQLERGARLVELLKQPQSQPMPVEEQVVSIFLGTGGHLDSVPVEDVRRFETELLDHMRASEEEILTEIRDSQKLTEEAADKLTEVIKNFKKGFAATGGGSVVPDEHVEALDEDKLAKEAVKVKKPAPKKKK</sequence>
<protein>
    <recommendedName>
        <fullName evidence="1">ATP synthase subunit alpha</fullName>
        <ecNumber evidence="1">7.1.2.2</ecNumber>
    </recommendedName>
    <alternativeName>
        <fullName evidence="1">ATP synthase F1 sector subunit alpha</fullName>
    </alternativeName>
    <alternativeName>
        <fullName evidence="1">F-ATPase subunit alpha</fullName>
    </alternativeName>
</protein>
<gene>
    <name evidence="1" type="primary">atpA</name>
    <name type="ordered locus">MRA_1316</name>
</gene>
<name>ATPA_MYCTA</name>
<accession>A5U207</accession>
<proteinExistence type="inferred from homology"/>
<feature type="chain" id="PRO_0000302673" description="ATP synthase subunit alpha">
    <location>
        <begin position="1"/>
        <end position="549"/>
    </location>
</feature>
<feature type="binding site" evidence="1">
    <location>
        <begin position="172"/>
        <end position="179"/>
    </location>
    <ligand>
        <name>ATP</name>
        <dbReference type="ChEBI" id="CHEBI:30616"/>
    </ligand>
</feature>
<feature type="site" description="Required for activity" evidence="1">
    <location>
        <position position="373"/>
    </location>
</feature>
<dbReference type="EC" id="7.1.2.2" evidence="1"/>
<dbReference type="EMBL" id="CP000611">
    <property type="protein sequence ID" value="ABQ73057.1"/>
    <property type="molecule type" value="Genomic_DNA"/>
</dbReference>
<dbReference type="RefSeq" id="WP_003406699.1">
    <property type="nucleotide sequence ID" value="NZ_CP016972.1"/>
</dbReference>
<dbReference type="SMR" id="A5U207"/>
<dbReference type="KEGG" id="mra:MRA_1316"/>
<dbReference type="eggNOG" id="COG0056">
    <property type="taxonomic scope" value="Bacteria"/>
</dbReference>
<dbReference type="HOGENOM" id="CLU_010091_2_1_11"/>
<dbReference type="Proteomes" id="UP000001988">
    <property type="component" value="Chromosome"/>
</dbReference>
<dbReference type="GO" id="GO:0005886">
    <property type="term" value="C:plasma membrane"/>
    <property type="evidence" value="ECO:0007669"/>
    <property type="project" value="UniProtKB-SubCell"/>
</dbReference>
<dbReference type="GO" id="GO:0045259">
    <property type="term" value="C:proton-transporting ATP synthase complex"/>
    <property type="evidence" value="ECO:0007669"/>
    <property type="project" value="UniProtKB-KW"/>
</dbReference>
<dbReference type="GO" id="GO:0043531">
    <property type="term" value="F:ADP binding"/>
    <property type="evidence" value="ECO:0007669"/>
    <property type="project" value="TreeGrafter"/>
</dbReference>
<dbReference type="GO" id="GO:0005524">
    <property type="term" value="F:ATP binding"/>
    <property type="evidence" value="ECO:0007669"/>
    <property type="project" value="UniProtKB-UniRule"/>
</dbReference>
<dbReference type="GO" id="GO:0046933">
    <property type="term" value="F:proton-transporting ATP synthase activity, rotational mechanism"/>
    <property type="evidence" value="ECO:0007669"/>
    <property type="project" value="UniProtKB-UniRule"/>
</dbReference>
<dbReference type="CDD" id="cd18113">
    <property type="entry name" value="ATP-synt_F1_alpha_C"/>
    <property type="match status" value="1"/>
</dbReference>
<dbReference type="CDD" id="cd18116">
    <property type="entry name" value="ATP-synt_F1_alpha_N"/>
    <property type="match status" value="1"/>
</dbReference>
<dbReference type="CDD" id="cd01132">
    <property type="entry name" value="F1-ATPase_alpha_CD"/>
    <property type="match status" value="1"/>
</dbReference>
<dbReference type="FunFam" id="1.20.150.20:FF:000001">
    <property type="entry name" value="ATP synthase subunit alpha"/>
    <property type="match status" value="1"/>
</dbReference>
<dbReference type="FunFam" id="2.40.30.20:FF:000001">
    <property type="entry name" value="ATP synthase subunit alpha"/>
    <property type="match status" value="1"/>
</dbReference>
<dbReference type="FunFam" id="3.40.50.300:FF:000002">
    <property type="entry name" value="ATP synthase subunit alpha"/>
    <property type="match status" value="1"/>
</dbReference>
<dbReference type="Gene3D" id="2.40.30.20">
    <property type="match status" value="1"/>
</dbReference>
<dbReference type="Gene3D" id="1.20.150.20">
    <property type="entry name" value="ATP synthase alpha/beta chain, C-terminal domain"/>
    <property type="match status" value="1"/>
</dbReference>
<dbReference type="Gene3D" id="3.40.50.300">
    <property type="entry name" value="P-loop containing nucleotide triphosphate hydrolases"/>
    <property type="match status" value="1"/>
</dbReference>
<dbReference type="HAMAP" id="MF_01346">
    <property type="entry name" value="ATP_synth_alpha_bact"/>
    <property type="match status" value="1"/>
</dbReference>
<dbReference type="InterPro" id="IPR023366">
    <property type="entry name" value="ATP_synth_asu-like_sf"/>
</dbReference>
<dbReference type="InterPro" id="IPR000793">
    <property type="entry name" value="ATP_synth_asu_C"/>
</dbReference>
<dbReference type="InterPro" id="IPR038376">
    <property type="entry name" value="ATP_synth_asu_C_sf"/>
</dbReference>
<dbReference type="InterPro" id="IPR033732">
    <property type="entry name" value="ATP_synth_F1_a_nt-bd_dom"/>
</dbReference>
<dbReference type="InterPro" id="IPR005294">
    <property type="entry name" value="ATP_synth_F1_asu"/>
</dbReference>
<dbReference type="InterPro" id="IPR020003">
    <property type="entry name" value="ATPase_a/bsu_AS"/>
</dbReference>
<dbReference type="InterPro" id="IPR004100">
    <property type="entry name" value="ATPase_F1/V1/A1_a/bsu_N"/>
</dbReference>
<dbReference type="InterPro" id="IPR036121">
    <property type="entry name" value="ATPase_F1/V1/A1_a/bsu_N_sf"/>
</dbReference>
<dbReference type="InterPro" id="IPR000194">
    <property type="entry name" value="ATPase_F1/V1/A1_a/bsu_nucl-bd"/>
</dbReference>
<dbReference type="InterPro" id="IPR027417">
    <property type="entry name" value="P-loop_NTPase"/>
</dbReference>
<dbReference type="NCBIfam" id="TIGR00962">
    <property type="entry name" value="atpA"/>
    <property type="match status" value="1"/>
</dbReference>
<dbReference type="NCBIfam" id="NF009884">
    <property type="entry name" value="PRK13343.1"/>
    <property type="match status" value="1"/>
</dbReference>
<dbReference type="PANTHER" id="PTHR48082">
    <property type="entry name" value="ATP SYNTHASE SUBUNIT ALPHA, MITOCHONDRIAL"/>
    <property type="match status" value="1"/>
</dbReference>
<dbReference type="PANTHER" id="PTHR48082:SF2">
    <property type="entry name" value="ATP SYNTHASE SUBUNIT ALPHA, MITOCHONDRIAL"/>
    <property type="match status" value="1"/>
</dbReference>
<dbReference type="Pfam" id="PF00006">
    <property type="entry name" value="ATP-synt_ab"/>
    <property type="match status" value="1"/>
</dbReference>
<dbReference type="Pfam" id="PF00306">
    <property type="entry name" value="ATP-synt_ab_C"/>
    <property type="match status" value="1"/>
</dbReference>
<dbReference type="Pfam" id="PF02874">
    <property type="entry name" value="ATP-synt_ab_N"/>
    <property type="match status" value="1"/>
</dbReference>
<dbReference type="PIRSF" id="PIRSF039088">
    <property type="entry name" value="F_ATPase_subunit_alpha"/>
    <property type="match status" value="1"/>
</dbReference>
<dbReference type="SUPFAM" id="SSF47917">
    <property type="entry name" value="C-terminal domain of alpha and beta subunits of F1 ATP synthase"/>
    <property type="match status" value="1"/>
</dbReference>
<dbReference type="SUPFAM" id="SSF50615">
    <property type="entry name" value="N-terminal domain of alpha and beta subunits of F1 ATP synthase"/>
    <property type="match status" value="1"/>
</dbReference>
<dbReference type="SUPFAM" id="SSF52540">
    <property type="entry name" value="P-loop containing nucleoside triphosphate hydrolases"/>
    <property type="match status" value="1"/>
</dbReference>
<dbReference type="PROSITE" id="PS00152">
    <property type="entry name" value="ATPASE_ALPHA_BETA"/>
    <property type="match status" value="1"/>
</dbReference>
<evidence type="ECO:0000255" key="1">
    <source>
        <dbReference type="HAMAP-Rule" id="MF_01346"/>
    </source>
</evidence>
<reference key="1">
    <citation type="journal article" date="2008" name="PLoS ONE">
        <title>Genetic basis of virulence attenuation revealed by comparative genomic analysis of Mycobacterium tuberculosis strain H37Ra versus H37Rv.</title>
        <authorList>
            <person name="Zheng H."/>
            <person name="Lu L."/>
            <person name="Wang B."/>
            <person name="Pu S."/>
            <person name="Zhang X."/>
            <person name="Zhu G."/>
            <person name="Shi W."/>
            <person name="Zhang L."/>
            <person name="Wang H."/>
            <person name="Wang S."/>
            <person name="Zhao G."/>
            <person name="Zhang Y."/>
        </authorList>
    </citation>
    <scope>NUCLEOTIDE SEQUENCE [LARGE SCALE GENOMIC DNA]</scope>
    <source>
        <strain>ATCC 25177 / H37Ra</strain>
    </source>
</reference>
<comment type="function">
    <text evidence="1">Produces ATP from ADP in the presence of a proton gradient across the membrane. The alpha chain is a regulatory subunit.</text>
</comment>
<comment type="catalytic activity">
    <reaction evidence="1">
        <text>ATP + H2O + 4 H(+)(in) = ADP + phosphate + 5 H(+)(out)</text>
        <dbReference type="Rhea" id="RHEA:57720"/>
        <dbReference type="ChEBI" id="CHEBI:15377"/>
        <dbReference type="ChEBI" id="CHEBI:15378"/>
        <dbReference type="ChEBI" id="CHEBI:30616"/>
        <dbReference type="ChEBI" id="CHEBI:43474"/>
        <dbReference type="ChEBI" id="CHEBI:456216"/>
        <dbReference type="EC" id="7.1.2.2"/>
    </reaction>
</comment>
<comment type="subunit">
    <text evidence="1">F-type ATPases have 2 components, CF(1) - the catalytic core - and CF(0) - the membrane proton channel. CF(1) has five subunits: alpha(3), beta(3), gamma(1), delta(1), epsilon(1). CF(0) has three main subunits: a(1), b(2) and c(9-12). The alpha and beta chains form an alternating ring which encloses part of the gamma chain. CF(1) is attached to CF(0) by a central stalk formed by the gamma and epsilon chains, while a peripheral stalk is formed by the delta and b chains.</text>
</comment>
<comment type="subcellular location">
    <subcellularLocation>
        <location evidence="1">Cell membrane</location>
        <topology evidence="1">Peripheral membrane protein</topology>
    </subcellularLocation>
</comment>
<comment type="similarity">
    <text evidence="1">Belongs to the ATPase alpha/beta chains family.</text>
</comment>